<feature type="chain" id="PRO_0000160268" description="Uncharacterized protein AFR743C-A">
    <location>
        <begin position="1"/>
        <end position="101"/>
    </location>
</feature>
<feature type="region of interest" description="Disordered" evidence="1">
    <location>
        <begin position="1"/>
        <end position="30"/>
    </location>
</feature>
<feature type="region of interest" description="Disordered" evidence="1">
    <location>
        <begin position="65"/>
        <end position="87"/>
    </location>
</feature>
<feature type="compositionally biased region" description="Basic residues" evidence="1">
    <location>
        <begin position="1"/>
        <end position="12"/>
    </location>
</feature>
<feature type="compositionally biased region" description="Low complexity" evidence="1">
    <location>
        <begin position="65"/>
        <end position="78"/>
    </location>
</feature>
<keyword id="KW-1185">Reference proteome</keyword>
<gene>
    <name type="ordered locus">AFR743C-A</name>
</gene>
<dbReference type="EMBL" id="AE016819">
    <property type="protein sequence ID" value="AAS54116.1"/>
    <property type="molecule type" value="Genomic_DNA"/>
</dbReference>
<dbReference type="RefSeq" id="NP_986292.1">
    <property type="nucleotide sequence ID" value="NM_212428.1"/>
</dbReference>
<dbReference type="FunCoup" id="Q751T1">
    <property type="interactions" value="2"/>
</dbReference>
<dbReference type="EnsemblFungi" id="AAS54116">
    <property type="protein sequence ID" value="AAS54116"/>
    <property type="gene ID" value="AGOS_AFR743CA"/>
</dbReference>
<dbReference type="GeneID" id="4622583"/>
<dbReference type="KEGG" id="ago:AGOS_AFR743CA"/>
<dbReference type="HOGENOM" id="CLU_2291061_0_0_1"/>
<dbReference type="InParanoid" id="Q751T1"/>
<dbReference type="OrthoDB" id="10475436at2759"/>
<dbReference type="Proteomes" id="UP000000591">
    <property type="component" value="Chromosome VI"/>
</dbReference>
<protein>
    <recommendedName>
        <fullName>Uncharacterized protein AFR743C-A</fullName>
    </recommendedName>
</protein>
<organism>
    <name type="scientific">Eremothecium gossypii (strain ATCC 10895 / CBS 109.51 / FGSC 9923 / NRRL Y-1056)</name>
    <name type="common">Yeast</name>
    <name type="synonym">Ashbya gossypii</name>
    <dbReference type="NCBI Taxonomy" id="284811"/>
    <lineage>
        <taxon>Eukaryota</taxon>
        <taxon>Fungi</taxon>
        <taxon>Dikarya</taxon>
        <taxon>Ascomycota</taxon>
        <taxon>Saccharomycotina</taxon>
        <taxon>Saccharomycetes</taxon>
        <taxon>Saccharomycetales</taxon>
        <taxon>Saccharomycetaceae</taxon>
        <taxon>Eremothecium</taxon>
    </lineage>
</organism>
<evidence type="ECO:0000256" key="1">
    <source>
        <dbReference type="SAM" id="MobiDB-lite"/>
    </source>
</evidence>
<sequence>MAAFQHRAKRSKNGASAKQGKISKADKKRAKLQVEKLDKRGVLLAELTAAAPAAKTGVLQAASLAQDQRSDAQAQQQRAQERSNVDKKVVQQLEAIAGFSL</sequence>
<accession>Q751T1</accession>
<reference key="1">
    <citation type="journal article" date="2004" name="Science">
        <title>The Ashbya gossypii genome as a tool for mapping the ancient Saccharomyces cerevisiae genome.</title>
        <authorList>
            <person name="Dietrich F.S."/>
            <person name="Voegeli S."/>
            <person name="Brachat S."/>
            <person name="Lerch A."/>
            <person name="Gates K."/>
            <person name="Steiner S."/>
            <person name="Mohr C."/>
            <person name="Poehlmann R."/>
            <person name="Luedi P."/>
            <person name="Choi S."/>
            <person name="Wing R.A."/>
            <person name="Flavier A."/>
            <person name="Gaffney T.D."/>
            <person name="Philippsen P."/>
        </authorList>
    </citation>
    <scope>NUCLEOTIDE SEQUENCE [LARGE SCALE GENOMIC DNA]</scope>
    <source>
        <strain>ATCC 10895 / CBS 109.51 / FGSC 9923 / NRRL Y-1056</strain>
    </source>
</reference>
<reference key="2">
    <citation type="journal article" date="2013" name="G3 (Bethesda)">
        <title>Genomes of Ashbya fungi isolated from insects reveal four mating-type loci, numerous translocations, lack of transposons, and distinct gene duplications.</title>
        <authorList>
            <person name="Dietrich F.S."/>
            <person name="Voegeli S."/>
            <person name="Kuo S."/>
            <person name="Philippsen P."/>
        </authorList>
    </citation>
    <scope>GENOME REANNOTATION</scope>
    <source>
        <strain>ATCC 10895 / CBS 109.51 / FGSC 9923 / NRRL Y-1056</strain>
    </source>
</reference>
<proteinExistence type="predicted"/>
<name>YF43_EREGS</name>